<gene>
    <name evidence="1" type="primary">serS</name>
    <name type="ordered locus">ERGA_CDS_04660</name>
</gene>
<dbReference type="EC" id="6.1.1.11" evidence="1"/>
<dbReference type="EMBL" id="CR925677">
    <property type="protein sequence ID" value="CAI27918.1"/>
    <property type="molecule type" value="Genomic_DNA"/>
</dbReference>
<dbReference type="RefSeq" id="WP_011255592.1">
    <property type="nucleotide sequence ID" value="NC_006831.1"/>
</dbReference>
<dbReference type="SMR" id="Q5FGY8"/>
<dbReference type="KEGG" id="erg:ERGA_CDS_04660"/>
<dbReference type="HOGENOM" id="CLU_023797_1_1_5"/>
<dbReference type="OrthoDB" id="9804647at2"/>
<dbReference type="UniPathway" id="UPA00906">
    <property type="reaction ID" value="UER00895"/>
</dbReference>
<dbReference type="Proteomes" id="UP000000533">
    <property type="component" value="Chromosome"/>
</dbReference>
<dbReference type="GO" id="GO:0005737">
    <property type="term" value="C:cytoplasm"/>
    <property type="evidence" value="ECO:0007669"/>
    <property type="project" value="UniProtKB-SubCell"/>
</dbReference>
<dbReference type="GO" id="GO:0005524">
    <property type="term" value="F:ATP binding"/>
    <property type="evidence" value="ECO:0007669"/>
    <property type="project" value="UniProtKB-UniRule"/>
</dbReference>
<dbReference type="GO" id="GO:0004828">
    <property type="term" value="F:serine-tRNA ligase activity"/>
    <property type="evidence" value="ECO:0007669"/>
    <property type="project" value="UniProtKB-UniRule"/>
</dbReference>
<dbReference type="GO" id="GO:0016260">
    <property type="term" value="P:selenocysteine biosynthetic process"/>
    <property type="evidence" value="ECO:0007669"/>
    <property type="project" value="UniProtKB-UniRule"/>
</dbReference>
<dbReference type="GO" id="GO:0006434">
    <property type="term" value="P:seryl-tRNA aminoacylation"/>
    <property type="evidence" value="ECO:0007669"/>
    <property type="project" value="UniProtKB-UniRule"/>
</dbReference>
<dbReference type="CDD" id="cd00770">
    <property type="entry name" value="SerRS_core"/>
    <property type="match status" value="1"/>
</dbReference>
<dbReference type="Gene3D" id="3.30.930.10">
    <property type="entry name" value="Bira Bifunctional Protein, Domain 2"/>
    <property type="match status" value="1"/>
</dbReference>
<dbReference type="Gene3D" id="1.10.287.40">
    <property type="entry name" value="Serine-tRNA synthetase, tRNA binding domain"/>
    <property type="match status" value="1"/>
</dbReference>
<dbReference type="HAMAP" id="MF_00176">
    <property type="entry name" value="Ser_tRNA_synth_type1"/>
    <property type="match status" value="1"/>
</dbReference>
<dbReference type="InterPro" id="IPR002314">
    <property type="entry name" value="aa-tRNA-synt_IIb"/>
</dbReference>
<dbReference type="InterPro" id="IPR006195">
    <property type="entry name" value="aa-tRNA-synth_II"/>
</dbReference>
<dbReference type="InterPro" id="IPR045864">
    <property type="entry name" value="aa-tRNA-synth_II/BPL/LPL"/>
</dbReference>
<dbReference type="InterPro" id="IPR002317">
    <property type="entry name" value="Ser-tRNA-ligase_type_1"/>
</dbReference>
<dbReference type="InterPro" id="IPR015866">
    <property type="entry name" value="Ser-tRNA-synth_1_N"/>
</dbReference>
<dbReference type="InterPro" id="IPR042103">
    <property type="entry name" value="SerRS_1_N_sf"/>
</dbReference>
<dbReference type="InterPro" id="IPR033729">
    <property type="entry name" value="SerRS_core"/>
</dbReference>
<dbReference type="InterPro" id="IPR010978">
    <property type="entry name" value="tRNA-bd_arm"/>
</dbReference>
<dbReference type="NCBIfam" id="TIGR00414">
    <property type="entry name" value="serS"/>
    <property type="match status" value="1"/>
</dbReference>
<dbReference type="PANTHER" id="PTHR43697:SF1">
    <property type="entry name" value="SERINE--TRNA LIGASE"/>
    <property type="match status" value="1"/>
</dbReference>
<dbReference type="PANTHER" id="PTHR43697">
    <property type="entry name" value="SERYL-TRNA SYNTHETASE"/>
    <property type="match status" value="1"/>
</dbReference>
<dbReference type="Pfam" id="PF02403">
    <property type="entry name" value="Seryl_tRNA_N"/>
    <property type="match status" value="1"/>
</dbReference>
<dbReference type="Pfam" id="PF00587">
    <property type="entry name" value="tRNA-synt_2b"/>
    <property type="match status" value="1"/>
</dbReference>
<dbReference type="PIRSF" id="PIRSF001529">
    <property type="entry name" value="Ser-tRNA-synth_IIa"/>
    <property type="match status" value="1"/>
</dbReference>
<dbReference type="PRINTS" id="PR00981">
    <property type="entry name" value="TRNASYNTHSER"/>
</dbReference>
<dbReference type="SUPFAM" id="SSF55681">
    <property type="entry name" value="Class II aaRS and biotin synthetases"/>
    <property type="match status" value="1"/>
</dbReference>
<dbReference type="SUPFAM" id="SSF46589">
    <property type="entry name" value="tRNA-binding arm"/>
    <property type="match status" value="1"/>
</dbReference>
<dbReference type="PROSITE" id="PS50862">
    <property type="entry name" value="AA_TRNA_LIGASE_II"/>
    <property type="match status" value="1"/>
</dbReference>
<keyword id="KW-0030">Aminoacyl-tRNA synthetase</keyword>
<keyword id="KW-0067">ATP-binding</keyword>
<keyword id="KW-0963">Cytoplasm</keyword>
<keyword id="KW-0436">Ligase</keyword>
<keyword id="KW-0547">Nucleotide-binding</keyword>
<keyword id="KW-0648">Protein biosynthesis</keyword>
<protein>
    <recommendedName>
        <fullName evidence="1">Serine--tRNA ligase</fullName>
        <ecNumber evidence="1">6.1.1.11</ecNumber>
    </recommendedName>
    <alternativeName>
        <fullName evidence="1">Seryl-tRNA synthetase</fullName>
        <shortName evidence="1">SerRS</shortName>
    </alternativeName>
    <alternativeName>
        <fullName evidence="1">Seryl-tRNA(Ser/Sec) synthetase</fullName>
    </alternativeName>
</protein>
<sequence>MHDIDFIKNNPELFDEAMQNRNFGKIAHKIIELSANKKHTLTQLYSLQKERNNITQEIEKLKKDNIQCDTQIELSKEITKKINHINNMIKTDSELIDLLNILPNIPDKKVPIGKDENDNIEIRRYGKKVDFKFPPKTHYELGENLNLMDFKQAAKLSGSRFVILKSQLAQLDRALANFMLDVHTQEFGYSEISHPVLVHESAMYGVGQLPKFADDSFKTTDNFRLIPTSEVALTNLVSNANINANELPIRLTACSQCFRSEAGSAGKDVRGMMRQHQFNKVELVSIVTEEQSELELERMTQVAEEILKKLELPYRVMMLCTGDLGFSASITYDIEVWIPSQNQYREISSCSNCKAFQARRMNAKYHTISNGNKVNKFVHTLNGSALAIGRTIIAILENYQNQDGSITIPHVLRKYMNNQDIIKKQ</sequence>
<evidence type="ECO:0000255" key="1">
    <source>
        <dbReference type="HAMAP-Rule" id="MF_00176"/>
    </source>
</evidence>
<proteinExistence type="inferred from homology"/>
<comment type="function">
    <text evidence="1">Catalyzes the attachment of serine to tRNA(Ser). Is also able to aminoacylate tRNA(Sec) with serine, to form the misacylated tRNA L-seryl-tRNA(Sec), which will be further converted into selenocysteinyl-tRNA(Sec).</text>
</comment>
<comment type="catalytic activity">
    <reaction evidence="1">
        <text>tRNA(Ser) + L-serine + ATP = L-seryl-tRNA(Ser) + AMP + diphosphate + H(+)</text>
        <dbReference type="Rhea" id="RHEA:12292"/>
        <dbReference type="Rhea" id="RHEA-COMP:9669"/>
        <dbReference type="Rhea" id="RHEA-COMP:9703"/>
        <dbReference type="ChEBI" id="CHEBI:15378"/>
        <dbReference type="ChEBI" id="CHEBI:30616"/>
        <dbReference type="ChEBI" id="CHEBI:33019"/>
        <dbReference type="ChEBI" id="CHEBI:33384"/>
        <dbReference type="ChEBI" id="CHEBI:78442"/>
        <dbReference type="ChEBI" id="CHEBI:78533"/>
        <dbReference type="ChEBI" id="CHEBI:456215"/>
        <dbReference type="EC" id="6.1.1.11"/>
    </reaction>
</comment>
<comment type="catalytic activity">
    <reaction evidence="1">
        <text>tRNA(Sec) + L-serine + ATP = L-seryl-tRNA(Sec) + AMP + diphosphate + H(+)</text>
        <dbReference type="Rhea" id="RHEA:42580"/>
        <dbReference type="Rhea" id="RHEA-COMP:9742"/>
        <dbReference type="Rhea" id="RHEA-COMP:10128"/>
        <dbReference type="ChEBI" id="CHEBI:15378"/>
        <dbReference type="ChEBI" id="CHEBI:30616"/>
        <dbReference type="ChEBI" id="CHEBI:33019"/>
        <dbReference type="ChEBI" id="CHEBI:33384"/>
        <dbReference type="ChEBI" id="CHEBI:78442"/>
        <dbReference type="ChEBI" id="CHEBI:78533"/>
        <dbReference type="ChEBI" id="CHEBI:456215"/>
        <dbReference type="EC" id="6.1.1.11"/>
    </reaction>
</comment>
<comment type="pathway">
    <text evidence="1">Aminoacyl-tRNA biosynthesis; selenocysteinyl-tRNA(Sec) biosynthesis; L-seryl-tRNA(Sec) from L-serine and tRNA(Sec): step 1/1.</text>
</comment>
<comment type="subunit">
    <text evidence="1">Homodimer. The tRNA molecule binds across the dimer.</text>
</comment>
<comment type="subcellular location">
    <subcellularLocation>
        <location evidence="1">Cytoplasm</location>
    </subcellularLocation>
</comment>
<comment type="domain">
    <text evidence="1">Consists of two distinct domains, a catalytic core and a N-terminal extension that is involved in tRNA binding.</text>
</comment>
<comment type="similarity">
    <text evidence="1">Belongs to the class-II aminoacyl-tRNA synthetase family. Type-1 seryl-tRNA synthetase subfamily.</text>
</comment>
<accession>Q5FGY8</accession>
<organism>
    <name type="scientific">Ehrlichia ruminantium (strain Gardel)</name>
    <dbReference type="NCBI Taxonomy" id="302409"/>
    <lineage>
        <taxon>Bacteria</taxon>
        <taxon>Pseudomonadati</taxon>
        <taxon>Pseudomonadota</taxon>
        <taxon>Alphaproteobacteria</taxon>
        <taxon>Rickettsiales</taxon>
        <taxon>Anaplasmataceae</taxon>
        <taxon>Ehrlichia</taxon>
    </lineage>
</organism>
<reference key="1">
    <citation type="journal article" date="2006" name="J. Bacteriol.">
        <title>Comparative genomic analysis of three strains of Ehrlichia ruminantium reveals an active process of genome size plasticity.</title>
        <authorList>
            <person name="Frutos R."/>
            <person name="Viari A."/>
            <person name="Ferraz C."/>
            <person name="Morgat A."/>
            <person name="Eychenie S."/>
            <person name="Kandassamy Y."/>
            <person name="Chantal I."/>
            <person name="Bensaid A."/>
            <person name="Coissac E."/>
            <person name="Vachiery N."/>
            <person name="Demaille J."/>
            <person name="Martinez D."/>
        </authorList>
    </citation>
    <scope>NUCLEOTIDE SEQUENCE [LARGE SCALE GENOMIC DNA]</scope>
    <source>
        <strain>Gardel</strain>
    </source>
</reference>
<name>SYS_EHRRG</name>
<feature type="chain" id="PRO_1000019677" description="Serine--tRNA ligase">
    <location>
        <begin position="1"/>
        <end position="425"/>
    </location>
</feature>
<feature type="binding site" evidence="1">
    <location>
        <begin position="228"/>
        <end position="230"/>
    </location>
    <ligand>
        <name>L-serine</name>
        <dbReference type="ChEBI" id="CHEBI:33384"/>
    </ligand>
</feature>
<feature type="binding site" evidence="1">
    <location>
        <begin position="259"/>
        <end position="261"/>
    </location>
    <ligand>
        <name>ATP</name>
        <dbReference type="ChEBI" id="CHEBI:30616"/>
    </ligand>
</feature>
<feature type="binding site" evidence="1">
    <location>
        <position position="282"/>
    </location>
    <ligand>
        <name>L-serine</name>
        <dbReference type="ChEBI" id="CHEBI:33384"/>
    </ligand>
</feature>
<feature type="binding site" evidence="1">
    <location>
        <begin position="346"/>
        <end position="349"/>
    </location>
    <ligand>
        <name>ATP</name>
        <dbReference type="ChEBI" id="CHEBI:30616"/>
    </ligand>
</feature>
<feature type="binding site" evidence="1">
    <location>
        <position position="384"/>
    </location>
    <ligand>
        <name>L-serine</name>
        <dbReference type="ChEBI" id="CHEBI:33384"/>
    </ligand>
</feature>